<geneLocation type="chloroplast"/>
<protein>
    <recommendedName>
        <fullName evidence="3">Large ribosomal subunit protein bL32c</fullName>
    </recommendedName>
    <alternativeName>
        <fullName>50S ribosomal protein L32, chloroplastic</fullName>
    </alternativeName>
</protein>
<dbReference type="EMBL" id="AB086179">
    <property type="protein sequence ID" value="BAC55398.1"/>
    <property type="molecule type" value="Genomic_DNA"/>
</dbReference>
<dbReference type="EMBL" id="AB087482">
    <property type="protein sequence ID" value="BAC55498.1"/>
    <property type="molecule type" value="mRNA"/>
</dbReference>
<dbReference type="RefSeq" id="NP_777461.1">
    <property type="nucleotide sequence ID" value="NC_004543.1"/>
</dbReference>
<dbReference type="SMR" id="Q85C28"/>
<dbReference type="GeneID" id="2553419"/>
<dbReference type="GO" id="GO:0009507">
    <property type="term" value="C:chloroplast"/>
    <property type="evidence" value="ECO:0007669"/>
    <property type="project" value="UniProtKB-SubCell"/>
</dbReference>
<dbReference type="GO" id="GO:0015934">
    <property type="term" value="C:large ribosomal subunit"/>
    <property type="evidence" value="ECO:0007669"/>
    <property type="project" value="InterPro"/>
</dbReference>
<dbReference type="GO" id="GO:0003735">
    <property type="term" value="F:structural constituent of ribosome"/>
    <property type="evidence" value="ECO:0007669"/>
    <property type="project" value="InterPro"/>
</dbReference>
<dbReference type="GO" id="GO:0006412">
    <property type="term" value="P:translation"/>
    <property type="evidence" value="ECO:0007669"/>
    <property type="project" value="UniProtKB-UniRule"/>
</dbReference>
<dbReference type="HAMAP" id="MF_00340">
    <property type="entry name" value="Ribosomal_bL32"/>
    <property type="match status" value="1"/>
</dbReference>
<dbReference type="InterPro" id="IPR002677">
    <property type="entry name" value="Ribosomal_bL32"/>
</dbReference>
<dbReference type="InterPro" id="IPR044958">
    <property type="entry name" value="Ribosomal_bL32_plant/cyanobact"/>
</dbReference>
<dbReference type="InterPro" id="IPR011332">
    <property type="entry name" value="Ribosomal_zn-bd"/>
</dbReference>
<dbReference type="PANTHER" id="PTHR36083">
    <property type="entry name" value="50S RIBOSOMAL PROTEIN L32, CHLOROPLASTIC"/>
    <property type="match status" value="1"/>
</dbReference>
<dbReference type="PANTHER" id="PTHR36083:SF1">
    <property type="entry name" value="LARGE RIBOSOMAL SUBUNIT PROTEIN BL32C"/>
    <property type="match status" value="1"/>
</dbReference>
<dbReference type="Pfam" id="PF01783">
    <property type="entry name" value="Ribosomal_L32p"/>
    <property type="match status" value="1"/>
</dbReference>
<dbReference type="SUPFAM" id="SSF57829">
    <property type="entry name" value="Zn-binding ribosomal proteins"/>
    <property type="match status" value="1"/>
</dbReference>
<name>RK32_ANTAG</name>
<comment type="subcellular location">
    <subcellularLocation>
        <location>Plastid</location>
        <location>Chloroplast</location>
    </subcellularLocation>
</comment>
<comment type="RNA editing">
    <location>
        <position position="57" evidence="1 2"/>
    </location>
</comment>
<comment type="similarity">
    <text evidence="3">Belongs to the bacterial ribosomal protein bL32 family.</text>
</comment>
<keyword id="KW-0150">Chloroplast</keyword>
<keyword id="KW-0934">Plastid</keyword>
<keyword id="KW-0687">Ribonucleoprotein</keyword>
<keyword id="KW-0689">Ribosomal protein</keyword>
<keyword id="KW-0691">RNA editing</keyword>
<sequence>MAVPKKRTSKSKRKIRKTVWREKANKAAKKAFSLARLILSGRSKSFCYTVNNKSSESSESTSIDESDDS</sequence>
<gene>
    <name type="primary">rpl32</name>
</gene>
<accession>Q85C28</accession>
<reference key="1">
    <citation type="journal article" date="2003" name="Nucleic Acids Res.">
        <title>The complete nucleotide sequence of the hornwort (Anthoceros formosae) chloroplast genome: insight into the earliest land plants.</title>
        <authorList>
            <person name="Kugita M."/>
            <person name="Kaneko A."/>
            <person name="Yamamoto Y."/>
            <person name="Takeya Y."/>
            <person name="Matsumoto T."/>
            <person name="Yoshinaga K."/>
        </authorList>
    </citation>
    <scope>NUCLEOTIDE SEQUENCE [LARGE SCALE GENOMIC DNA]</scope>
    <scope>RNA EDITING</scope>
</reference>
<reference key="2">
    <citation type="journal article" date="2003" name="Nucleic Acids Res.">
        <title>RNA editing in hornwort chloroplasts makes more than half the genes functional.</title>
        <authorList>
            <person name="Kugita M."/>
            <person name="Yamamoto Y."/>
            <person name="Fujikawa T."/>
            <person name="Matsumoto T."/>
            <person name="Yoshinaga K."/>
        </authorList>
    </citation>
    <scope>NUCLEOTIDE SEQUENCE [MRNA]</scope>
    <scope>RNA EDITING</scope>
    <source>
        <tissue>Thallus</tissue>
    </source>
</reference>
<evidence type="ECO:0000269" key="1">
    <source>
    </source>
</evidence>
<evidence type="ECO:0000269" key="2">
    <source>
    </source>
</evidence>
<evidence type="ECO:0000305" key="3"/>
<feature type="chain" id="PRO_0000172447" description="Large ribosomal subunit protein bL32c">
    <location>
        <begin position="1"/>
        <end position="69"/>
    </location>
</feature>
<organism>
    <name type="scientific">Anthoceros angustus</name>
    <name type="common">Hornwort</name>
    <name type="synonym">Anthoceros formosae</name>
    <dbReference type="NCBI Taxonomy" id="48387"/>
    <lineage>
        <taxon>Eukaryota</taxon>
        <taxon>Viridiplantae</taxon>
        <taxon>Streptophyta</taxon>
        <taxon>Embryophyta</taxon>
        <taxon>Anthocerotophyta</taxon>
        <taxon>Anthocerotopsida</taxon>
        <taxon>Anthocerotidae</taxon>
        <taxon>Anthocerotales</taxon>
        <taxon>Anthocerotaceae</taxon>
        <taxon>Anthoceros</taxon>
    </lineage>
</organism>
<proteinExistence type="evidence at transcript level"/>